<dbReference type="EMBL" id="AF479815">
    <property type="protein sequence ID" value="AAN73437.1"/>
    <property type="molecule type" value="mRNA"/>
</dbReference>
<dbReference type="EMBL" id="BC028852">
    <property type="protein sequence ID" value="AAH28852.2"/>
    <property type="molecule type" value="mRNA"/>
</dbReference>
<dbReference type="CCDS" id="CCDS22578.1"/>
<dbReference type="RefSeq" id="NP_705810.2">
    <property type="nucleotide sequence ID" value="NM_153582.5"/>
</dbReference>
<dbReference type="SMR" id="Q8CJ61"/>
<dbReference type="FunCoup" id="Q8CJ61">
    <property type="interactions" value="226"/>
</dbReference>
<dbReference type="STRING" id="10090.ENSMUSP00000137332"/>
<dbReference type="iPTMnet" id="Q8CJ61"/>
<dbReference type="PhosphoSitePlus" id="Q8CJ61"/>
<dbReference type="SwissPalm" id="Q8CJ61"/>
<dbReference type="PaxDb" id="10090-ENSMUSP00000137332"/>
<dbReference type="PeptideAtlas" id="Q8CJ61"/>
<dbReference type="ProteomicsDB" id="283929"/>
<dbReference type="Pumba" id="Q8CJ61"/>
<dbReference type="Antibodypedia" id="15544">
    <property type="antibodies" value="146 antibodies from 26 providers"/>
</dbReference>
<dbReference type="DNASU" id="97487"/>
<dbReference type="Ensembl" id="ENSMUST00000179802.2">
    <property type="protein sequence ID" value="ENSMUSP00000137332.2"/>
    <property type="gene ID" value="ENSMUSG00000096188.2"/>
</dbReference>
<dbReference type="GeneID" id="97487"/>
<dbReference type="KEGG" id="mmu:97487"/>
<dbReference type="UCSC" id="uc009nan.2">
    <property type="organism name" value="mouse"/>
</dbReference>
<dbReference type="AGR" id="MGI:2142888"/>
<dbReference type="CTD" id="146223"/>
<dbReference type="MGI" id="MGI:2142888">
    <property type="gene designation" value="Cmtm4"/>
</dbReference>
<dbReference type="VEuPathDB" id="HostDB:ENSMUSG00000096188"/>
<dbReference type="eggNOG" id="KOG4788">
    <property type="taxonomic scope" value="Eukaryota"/>
</dbReference>
<dbReference type="GeneTree" id="ENSGT00940000159573"/>
<dbReference type="HOGENOM" id="CLU_104458_0_0_1"/>
<dbReference type="InParanoid" id="Q8CJ61"/>
<dbReference type="OMA" id="NHKKGAE"/>
<dbReference type="OrthoDB" id="10028364at2759"/>
<dbReference type="PhylomeDB" id="Q8CJ61"/>
<dbReference type="TreeFam" id="TF317387"/>
<dbReference type="BioGRID-ORCS" id="97487">
    <property type="hits" value="2 hits in 77 CRISPR screens"/>
</dbReference>
<dbReference type="ChiTaRS" id="Cmtm4">
    <property type="organism name" value="mouse"/>
</dbReference>
<dbReference type="PRO" id="PR:Q8CJ61"/>
<dbReference type="Proteomes" id="UP000000589">
    <property type="component" value="Chromosome 8"/>
</dbReference>
<dbReference type="RNAct" id="Q8CJ61">
    <property type="molecule type" value="protein"/>
</dbReference>
<dbReference type="Bgee" id="ENSMUSG00000096188">
    <property type="expression patterns" value="Expressed in dorsal pancreas and 216 other cell types or tissues"/>
</dbReference>
<dbReference type="GO" id="GO:0016020">
    <property type="term" value="C:membrane"/>
    <property type="evidence" value="ECO:0007669"/>
    <property type="project" value="UniProtKB-SubCell"/>
</dbReference>
<dbReference type="InterPro" id="IPR008253">
    <property type="entry name" value="Marvel"/>
</dbReference>
<dbReference type="InterPro" id="IPR050578">
    <property type="entry name" value="MARVEL-CKLF_proteins"/>
</dbReference>
<dbReference type="PANTHER" id="PTHR22776:SF29">
    <property type="entry name" value="CKLF-LIKE MARVEL TRANSMEMBRANE DOMAIN-CONTAINING PROTEIN 4"/>
    <property type="match status" value="1"/>
</dbReference>
<dbReference type="PANTHER" id="PTHR22776">
    <property type="entry name" value="MARVEL-CONTAINING POTENTIAL LIPID RAFT-ASSOCIATED PROTEIN"/>
    <property type="match status" value="1"/>
</dbReference>
<dbReference type="Pfam" id="PF01284">
    <property type="entry name" value="MARVEL"/>
    <property type="match status" value="1"/>
</dbReference>
<dbReference type="PROSITE" id="PS51225">
    <property type="entry name" value="MARVEL"/>
    <property type="match status" value="1"/>
</dbReference>
<organism>
    <name type="scientific">Mus musculus</name>
    <name type="common">Mouse</name>
    <dbReference type="NCBI Taxonomy" id="10090"/>
    <lineage>
        <taxon>Eukaryota</taxon>
        <taxon>Metazoa</taxon>
        <taxon>Chordata</taxon>
        <taxon>Craniata</taxon>
        <taxon>Vertebrata</taxon>
        <taxon>Euteleostomi</taxon>
        <taxon>Mammalia</taxon>
        <taxon>Eutheria</taxon>
        <taxon>Euarchontoglires</taxon>
        <taxon>Glires</taxon>
        <taxon>Rodentia</taxon>
        <taxon>Myomorpha</taxon>
        <taxon>Muroidea</taxon>
        <taxon>Muridae</taxon>
        <taxon>Murinae</taxon>
        <taxon>Mus</taxon>
        <taxon>Mus</taxon>
    </lineage>
</organism>
<accession>Q8CJ61</accession>
<accession>Q8K143</accession>
<comment type="function">
    <text evidence="1">Acts as a backup for CMTM6 to regulate plasma membrane expression of PD-L1/CD274, an immune inhibitory ligand critical for immune tolerance to self and antitumor immunity. May protect PD-L1/CD274 from being polyubiquitinated and targeted for degradation.</text>
</comment>
<comment type="subunit">
    <text evidence="1">Interacts with PD1L1 and CMTM6.</text>
</comment>
<comment type="subcellular location">
    <subcellularLocation>
        <location evidence="2">Membrane</location>
        <topology evidence="2">Multi-pass membrane protein</topology>
    </subcellularLocation>
</comment>
<comment type="similarity">
    <text evidence="5">Belongs to the chemokine-like factor family.</text>
</comment>
<name>CKLF4_MOUSE</name>
<protein>
    <recommendedName>
        <fullName>CKLF-like MARVEL transmembrane domain-containing protein 4</fullName>
    </recommendedName>
    <alternativeName>
        <fullName>Chemokine-like factor superfamily member 4</fullName>
    </alternativeName>
</protein>
<proteinExistence type="evidence at protein level"/>
<gene>
    <name evidence="6" type="primary">Cmtm4</name>
    <name type="synonym">Cklfsf4</name>
</gene>
<keyword id="KW-0472">Membrane</keyword>
<keyword id="KW-0597">Phosphoprotein</keyword>
<keyword id="KW-1185">Reference proteome</keyword>
<keyword id="KW-0812">Transmembrane</keyword>
<keyword id="KW-1133">Transmembrane helix</keyword>
<reference key="1">
    <citation type="submission" date="2002-02" db="EMBL/GenBank/DDBJ databases">
        <authorList>
            <person name="Han W."/>
            <person name="Ding P."/>
            <person name="Wang L."/>
            <person name="Wang Y."/>
            <person name="Qiu X."/>
            <person name="Chen Y."/>
            <person name="Tan Y."/>
            <person name="Song Q."/>
            <person name="Zhang Y."/>
            <person name="Ma D."/>
        </authorList>
    </citation>
    <scope>NUCLEOTIDE SEQUENCE [MRNA]</scope>
    <source>
        <tissue>Spleen</tissue>
    </source>
</reference>
<reference key="2">
    <citation type="journal article" date="2004" name="Genome Res.">
        <title>The status, quality, and expansion of the NIH full-length cDNA project: the Mammalian Gene Collection (MGC).</title>
        <authorList>
            <consortium name="The MGC Project Team"/>
        </authorList>
    </citation>
    <scope>NUCLEOTIDE SEQUENCE [LARGE SCALE MRNA]</scope>
    <source>
        <strain>FVB/N</strain>
        <tissue>Colon</tissue>
    </source>
</reference>
<reference key="3">
    <citation type="journal article" date="2010" name="Cell">
        <title>A tissue-specific atlas of mouse protein phosphorylation and expression.</title>
        <authorList>
            <person name="Huttlin E.L."/>
            <person name="Jedrychowski M.P."/>
            <person name="Elias J.E."/>
            <person name="Goswami T."/>
            <person name="Rad R."/>
            <person name="Beausoleil S.A."/>
            <person name="Villen J."/>
            <person name="Haas W."/>
            <person name="Sowa M.E."/>
            <person name="Gygi S.P."/>
        </authorList>
    </citation>
    <scope>IDENTIFICATION BY MASS SPECTROMETRY [LARGE SCALE ANALYSIS]</scope>
    <source>
        <tissue>Brain</tissue>
        <tissue>Kidney</tissue>
        <tissue>Lung</tissue>
        <tissue>Pancreas</tissue>
        <tissue>Spleen</tissue>
    </source>
</reference>
<sequence>MRGGEELDGFEGEASSTSMISGASSPYQPTTEPVSQRRGLAGLRCDPDYLRGALGRLKVAQVILALIAFICIETIMECSPCEGLYFFEFVSCSAFVVTGVLLILFSLNLHMRIPQINWNLTDLVNTGLSTFFFFIASIVLAALNHKTGAEIAAVIFGFLATAAYAVSTFLAMQKWRVSVRQQSTNDYIRARTESRDVDSRPEIQRLDT</sequence>
<feature type="chain" id="PRO_0000186104" description="CKLF-like MARVEL transmembrane domain-containing protein 4">
    <location>
        <begin position="1"/>
        <end position="208"/>
    </location>
</feature>
<feature type="transmembrane region" description="Helical" evidence="2">
    <location>
        <begin position="59"/>
        <end position="79"/>
    </location>
</feature>
<feature type="transmembrane region" description="Helical" evidence="2">
    <location>
        <begin position="85"/>
        <end position="105"/>
    </location>
</feature>
<feature type="transmembrane region" description="Helical" evidence="2">
    <location>
        <begin position="123"/>
        <end position="143"/>
    </location>
</feature>
<feature type="transmembrane region" description="Helical" evidence="2">
    <location>
        <begin position="151"/>
        <end position="171"/>
    </location>
</feature>
<feature type="domain" description="MARVEL" evidence="3">
    <location>
        <begin position="49"/>
        <end position="176"/>
    </location>
</feature>
<feature type="region of interest" description="Disordered" evidence="4">
    <location>
        <begin position="1"/>
        <end position="38"/>
    </location>
</feature>
<feature type="compositionally biased region" description="Acidic residues" evidence="4">
    <location>
        <begin position="1"/>
        <end position="11"/>
    </location>
</feature>
<feature type="compositionally biased region" description="Low complexity" evidence="4">
    <location>
        <begin position="15"/>
        <end position="25"/>
    </location>
</feature>
<feature type="modified residue" description="Phosphoserine" evidence="1">
    <location>
        <position position="194"/>
    </location>
</feature>
<evidence type="ECO:0000250" key="1">
    <source>
        <dbReference type="UniProtKB" id="Q8IZR5"/>
    </source>
</evidence>
<evidence type="ECO:0000255" key="2"/>
<evidence type="ECO:0000255" key="3">
    <source>
        <dbReference type="PROSITE-ProRule" id="PRU00581"/>
    </source>
</evidence>
<evidence type="ECO:0000256" key="4">
    <source>
        <dbReference type="SAM" id="MobiDB-lite"/>
    </source>
</evidence>
<evidence type="ECO:0000305" key="5"/>
<evidence type="ECO:0000312" key="6">
    <source>
        <dbReference type="MGI" id="MGI:2142888"/>
    </source>
</evidence>